<organism>
    <name type="scientific">Novosphingobium aromaticivorans (strain ATCC 700278 / DSM 12444 / CCUG 56034 / CIP 105152 / NBRC 16084 / F199)</name>
    <dbReference type="NCBI Taxonomy" id="279238"/>
    <lineage>
        <taxon>Bacteria</taxon>
        <taxon>Pseudomonadati</taxon>
        <taxon>Pseudomonadota</taxon>
        <taxon>Alphaproteobacteria</taxon>
        <taxon>Sphingomonadales</taxon>
        <taxon>Sphingomonadaceae</taxon>
        <taxon>Novosphingobium</taxon>
    </lineage>
</organism>
<reference key="1">
    <citation type="submission" date="2006-01" db="EMBL/GenBank/DDBJ databases">
        <title>Complete sequence of Novosphingobium aromaticivorans DSM 12444.</title>
        <authorList>
            <consortium name="US DOE Joint Genome Institute"/>
            <person name="Copeland A."/>
            <person name="Lucas S."/>
            <person name="Lapidus A."/>
            <person name="Barry K."/>
            <person name="Detter J.C."/>
            <person name="Glavina T."/>
            <person name="Hammon N."/>
            <person name="Israni S."/>
            <person name="Pitluck S."/>
            <person name="Chain P."/>
            <person name="Malfatti S."/>
            <person name="Shin M."/>
            <person name="Vergez L."/>
            <person name="Schmutz J."/>
            <person name="Larimer F."/>
            <person name="Land M."/>
            <person name="Kyrpides N."/>
            <person name="Ivanova N."/>
            <person name="Fredrickson J."/>
            <person name="Balkwill D."/>
            <person name="Romine M.F."/>
            <person name="Richardson P."/>
        </authorList>
    </citation>
    <scope>NUCLEOTIDE SEQUENCE [LARGE SCALE GENOMIC DNA]</scope>
    <source>
        <strain>ATCC 700278 / DSM 12444 / CCUG 56034 / CIP 105152 / NBRC 16084 / F199</strain>
    </source>
</reference>
<accession>Q2G341</accession>
<gene>
    <name evidence="1" type="primary">argB</name>
    <name type="ordered locus">Saro_3297</name>
</gene>
<protein>
    <recommendedName>
        <fullName evidence="1">Acetylglutamate kinase</fullName>
        <ecNumber evidence="1">2.7.2.8</ecNumber>
    </recommendedName>
    <alternativeName>
        <fullName evidence="1">N-acetyl-L-glutamate 5-phosphotransferase</fullName>
    </alternativeName>
    <alternativeName>
        <fullName evidence="1">NAG kinase</fullName>
        <shortName evidence="1">NAGK</shortName>
    </alternativeName>
</protein>
<sequence length="303" mass="31542">MSQNHDPAMLAKAETLTEALPYLQRYAGKTFVVKYGGHAMGDPELAQDFAEDIVLLKAVGINPVVVHGGGPQIGRMLKALGIESRFVDGLRVTDKQTAEVAEMVLAGAINKELVSWIARAGGKAIGISGKDGGMVIARKVEAKKAPKAVADAESGDPIVVDLGFVGEPDRIDTTVIDTICKAGMIPVIAPIGVGEDGETYNINADTMAGSIAAALGAARLFLLTDVPGVLDKDKNLLTDLRPADIARLAEDGTISGGMIPKLETCVHAVEAGCEATVVLDGRVPHAMLLEIFTARGAGTLIRA</sequence>
<keyword id="KW-0028">Amino-acid biosynthesis</keyword>
<keyword id="KW-0055">Arginine biosynthesis</keyword>
<keyword id="KW-0067">ATP-binding</keyword>
<keyword id="KW-0963">Cytoplasm</keyword>
<keyword id="KW-0418">Kinase</keyword>
<keyword id="KW-0547">Nucleotide-binding</keyword>
<keyword id="KW-1185">Reference proteome</keyword>
<keyword id="KW-0808">Transferase</keyword>
<comment type="function">
    <text evidence="1">Catalyzes the ATP-dependent phosphorylation of N-acetyl-L-glutamate.</text>
</comment>
<comment type="catalytic activity">
    <reaction evidence="1">
        <text>N-acetyl-L-glutamate + ATP = N-acetyl-L-glutamyl 5-phosphate + ADP</text>
        <dbReference type="Rhea" id="RHEA:14629"/>
        <dbReference type="ChEBI" id="CHEBI:30616"/>
        <dbReference type="ChEBI" id="CHEBI:44337"/>
        <dbReference type="ChEBI" id="CHEBI:57936"/>
        <dbReference type="ChEBI" id="CHEBI:456216"/>
        <dbReference type="EC" id="2.7.2.8"/>
    </reaction>
</comment>
<comment type="pathway">
    <text evidence="1">Amino-acid biosynthesis; L-arginine biosynthesis; N(2)-acetyl-L-ornithine from L-glutamate: step 2/4.</text>
</comment>
<comment type="subcellular location">
    <subcellularLocation>
        <location evidence="1">Cytoplasm</location>
    </subcellularLocation>
</comment>
<comment type="similarity">
    <text evidence="1">Belongs to the acetylglutamate kinase family. ArgB subfamily.</text>
</comment>
<proteinExistence type="inferred from homology"/>
<dbReference type="EC" id="2.7.2.8" evidence="1"/>
<dbReference type="EMBL" id="CP000248">
    <property type="protein sequence ID" value="ABD27732.1"/>
    <property type="molecule type" value="Genomic_DNA"/>
</dbReference>
<dbReference type="RefSeq" id="WP_011446934.1">
    <property type="nucleotide sequence ID" value="NC_007794.1"/>
</dbReference>
<dbReference type="SMR" id="Q2G341"/>
<dbReference type="STRING" id="279238.Saro_3297"/>
<dbReference type="KEGG" id="nar:Saro_3297"/>
<dbReference type="eggNOG" id="COG0548">
    <property type="taxonomic scope" value="Bacteria"/>
</dbReference>
<dbReference type="HOGENOM" id="CLU_053680_0_0_5"/>
<dbReference type="UniPathway" id="UPA00068">
    <property type="reaction ID" value="UER00107"/>
</dbReference>
<dbReference type="Proteomes" id="UP000009134">
    <property type="component" value="Chromosome"/>
</dbReference>
<dbReference type="GO" id="GO:0005737">
    <property type="term" value="C:cytoplasm"/>
    <property type="evidence" value="ECO:0007669"/>
    <property type="project" value="UniProtKB-SubCell"/>
</dbReference>
<dbReference type="GO" id="GO:0003991">
    <property type="term" value="F:acetylglutamate kinase activity"/>
    <property type="evidence" value="ECO:0007669"/>
    <property type="project" value="UniProtKB-UniRule"/>
</dbReference>
<dbReference type="GO" id="GO:0005524">
    <property type="term" value="F:ATP binding"/>
    <property type="evidence" value="ECO:0007669"/>
    <property type="project" value="UniProtKB-UniRule"/>
</dbReference>
<dbReference type="GO" id="GO:0042450">
    <property type="term" value="P:arginine biosynthetic process via ornithine"/>
    <property type="evidence" value="ECO:0007669"/>
    <property type="project" value="UniProtKB-UniRule"/>
</dbReference>
<dbReference type="GO" id="GO:0006526">
    <property type="term" value="P:L-arginine biosynthetic process"/>
    <property type="evidence" value="ECO:0007669"/>
    <property type="project" value="UniProtKB-UniPathway"/>
</dbReference>
<dbReference type="CDD" id="cd04250">
    <property type="entry name" value="AAK_NAGK-C"/>
    <property type="match status" value="1"/>
</dbReference>
<dbReference type="FunFam" id="3.40.1160.10:FF:000004">
    <property type="entry name" value="Acetylglutamate kinase"/>
    <property type="match status" value="1"/>
</dbReference>
<dbReference type="Gene3D" id="3.40.1160.10">
    <property type="entry name" value="Acetylglutamate kinase-like"/>
    <property type="match status" value="1"/>
</dbReference>
<dbReference type="HAMAP" id="MF_00082">
    <property type="entry name" value="ArgB"/>
    <property type="match status" value="1"/>
</dbReference>
<dbReference type="InterPro" id="IPR036393">
    <property type="entry name" value="AceGlu_kinase-like_sf"/>
</dbReference>
<dbReference type="InterPro" id="IPR004662">
    <property type="entry name" value="AcgluKinase_fam"/>
</dbReference>
<dbReference type="InterPro" id="IPR037528">
    <property type="entry name" value="ArgB"/>
</dbReference>
<dbReference type="InterPro" id="IPR001048">
    <property type="entry name" value="Asp/Glu/Uridylate_kinase"/>
</dbReference>
<dbReference type="InterPro" id="IPR001057">
    <property type="entry name" value="Glu/AcGlu_kinase"/>
</dbReference>
<dbReference type="InterPro" id="IPR041727">
    <property type="entry name" value="NAGK-C"/>
</dbReference>
<dbReference type="NCBIfam" id="TIGR00761">
    <property type="entry name" value="argB"/>
    <property type="match status" value="1"/>
</dbReference>
<dbReference type="PANTHER" id="PTHR23342">
    <property type="entry name" value="N-ACETYLGLUTAMATE SYNTHASE"/>
    <property type="match status" value="1"/>
</dbReference>
<dbReference type="PANTHER" id="PTHR23342:SF0">
    <property type="entry name" value="N-ACETYLGLUTAMATE SYNTHASE, MITOCHONDRIAL"/>
    <property type="match status" value="1"/>
</dbReference>
<dbReference type="Pfam" id="PF00696">
    <property type="entry name" value="AA_kinase"/>
    <property type="match status" value="1"/>
</dbReference>
<dbReference type="PIRSF" id="PIRSF000728">
    <property type="entry name" value="NAGK"/>
    <property type="match status" value="1"/>
</dbReference>
<dbReference type="PRINTS" id="PR00474">
    <property type="entry name" value="GLU5KINASE"/>
</dbReference>
<dbReference type="SUPFAM" id="SSF53633">
    <property type="entry name" value="Carbamate kinase-like"/>
    <property type="match status" value="1"/>
</dbReference>
<feature type="chain" id="PRO_0000264727" description="Acetylglutamate kinase">
    <location>
        <begin position="1"/>
        <end position="303"/>
    </location>
</feature>
<feature type="binding site" evidence="1">
    <location>
        <begin position="69"/>
        <end position="70"/>
    </location>
    <ligand>
        <name>substrate</name>
    </ligand>
</feature>
<feature type="binding site" evidence="1">
    <location>
        <position position="91"/>
    </location>
    <ligand>
        <name>substrate</name>
    </ligand>
</feature>
<feature type="binding site" evidence="1">
    <location>
        <position position="201"/>
    </location>
    <ligand>
        <name>substrate</name>
    </ligand>
</feature>
<feature type="site" description="Transition state stabilizer" evidence="1">
    <location>
        <position position="34"/>
    </location>
</feature>
<feature type="site" description="Transition state stabilizer" evidence="1">
    <location>
        <position position="261"/>
    </location>
</feature>
<evidence type="ECO:0000255" key="1">
    <source>
        <dbReference type="HAMAP-Rule" id="MF_00082"/>
    </source>
</evidence>
<name>ARGB_NOVAD</name>